<protein>
    <recommendedName>
        <fullName evidence="1">HTH-type transcriptional activator RhaS</fullName>
    </recommendedName>
    <alternativeName>
        <fullName evidence="1">L-rhamnose operon regulatory protein RhaS</fullName>
    </alternativeName>
</protein>
<organism>
    <name type="scientific">Escherichia coli (strain 55989 / EAEC)</name>
    <dbReference type="NCBI Taxonomy" id="585055"/>
    <lineage>
        <taxon>Bacteria</taxon>
        <taxon>Pseudomonadati</taxon>
        <taxon>Pseudomonadota</taxon>
        <taxon>Gammaproteobacteria</taxon>
        <taxon>Enterobacterales</taxon>
        <taxon>Enterobacteriaceae</taxon>
        <taxon>Escherichia</taxon>
    </lineage>
</organism>
<name>RHAS_ECO55</name>
<evidence type="ECO:0000255" key="1">
    <source>
        <dbReference type="HAMAP-Rule" id="MF_01534"/>
    </source>
</evidence>
<comment type="function">
    <text evidence="1">Activates expression of the rhaBAD and rhaT operons.</text>
</comment>
<comment type="subunit">
    <text evidence="1">Binds DNA as a dimer.</text>
</comment>
<comment type="subcellular location">
    <subcellularLocation>
        <location evidence="1">Cytoplasm</location>
    </subcellularLocation>
</comment>
<gene>
    <name evidence="1" type="primary">rhaS</name>
    <name type="ordered locus">EC55989_4384</name>
</gene>
<proteinExistence type="inferred from homology"/>
<dbReference type="EMBL" id="CU928145">
    <property type="protein sequence ID" value="CAV01091.1"/>
    <property type="molecule type" value="Genomic_DNA"/>
</dbReference>
<dbReference type="RefSeq" id="WP_000217137.1">
    <property type="nucleotide sequence ID" value="NC_011748.1"/>
</dbReference>
<dbReference type="SMR" id="B7L9G1"/>
<dbReference type="GeneID" id="75204579"/>
<dbReference type="KEGG" id="eck:EC55989_4384"/>
<dbReference type="HOGENOM" id="CLU_000445_88_5_6"/>
<dbReference type="Proteomes" id="UP000000746">
    <property type="component" value="Chromosome"/>
</dbReference>
<dbReference type="GO" id="GO:0005737">
    <property type="term" value="C:cytoplasm"/>
    <property type="evidence" value="ECO:0007669"/>
    <property type="project" value="UniProtKB-SubCell"/>
</dbReference>
<dbReference type="GO" id="GO:0003700">
    <property type="term" value="F:DNA-binding transcription factor activity"/>
    <property type="evidence" value="ECO:0007669"/>
    <property type="project" value="UniProtKB-UniRule"/>
</dbReference>
<dbReference type="GO" id="GO:0043565">
    <property type="term" value="F:sequence-specific DNA binding"/>
    <property type="evidence" value="ECO:0007669"/>
    <property type="project" value="InterPro"/>
</dbReference>
<dbReference type="GO" id="GO:0045893">
    <property type="term" value="P:positive regulation of DNA-templated transcription"/>
    <property type="evidence" value="ECO:0007669"/>
    <property type="project" value="UniProtKB-UniRule"/>
</dbReference>
<dbReference type="GO" id="GO:0019299">
    <property type="term" value="P:rhamnose metabolic process"/>
    <property type="evidence" value="ECO:0007669"/>
    <property type="project" value="UniProtKB-UniRule"/>
</dbReference>
<dbReference type="CDD" id="cd06977">
    <property type="entry name" value="cupin_RhaR_RhaS-like_N"/>
    <property type="match status" value="1"/>
</dbReference>
<dbReference type="FunFam" id="1.10.10.60:FF:000181">
    <property type="entry name" value="HTH-type transcriptional activator RhaS"/>
    <property type="match status" value="1"/>
</dbReference>
<dbReference type="FunFam" id="2.60.120.10:FF:000041">
    <property type="entry name" value="HTH-type transcriptional activator RhaS"/>
    <property type="match status" value="1"/>
</dbReference>
<dbReference type="Gene3D" id="1.10.10.60">
    <property type="entry name" value="Homeodomain-like"/>
    <property type="match status" value="1"/>
</dbReference>
<dbReference type="Gene3D" id="2.60.120.10">
    <property type="entry name" value="Jelly Rolls"/>
    <property type="match status" value="1"/>
</dbReference>
<dbReference type="HAMAP" id="MF_01534">
    <property type="entry name" value="HTH_type_RhaS"/>
    <property type="match status" value="1"/>
</dbReference>
<dbReference type="InterPro" id="IPR003313">
    <property type="entry name" value="AraC-bd"/>
</dbReference>
<dbReference type="InterPro" id="IPR050204">
    <property type="entry name" value="AraC_XylS_family_regulators"/>
</dbReference>
<dbReference type="InterPro" id="IPR009057">
    <property type="entry name" value="Homeodomain-like_sf"/>
</dbReference>
<dbReference type="InterPro" id="IPR037923">
    <property type="entry name" value="HTH-like"/>
</dbReference>
<dbReference type="InterPro" id="IPR018060">
    <property type="entry name" value="HTH_AraC"/>
</dbReference>
<dbReference type="InterPro" id="IPR018062">
    <property type="entry name" value="HTH_AraC-typ_CS"/>
</dbReference>
<dbReference type="InterPro" id="IPR047220">
    <property type="entry name" value="RhaR_RhaS-like_N"/>
</dbReference>
<dbReference type="InterPro" id="IPR014710">
    <property type="entry name" value="RmlC-like_jellyroll"/>
</dbReference>
<dbReference type="InterPro" id="IPR020449">
    <property type="entry name" value="Tscrpt_reg_AraC-type_HTH"/>
</dbReference>
<dbReference type="InterPro" id="IPR023609">
    <property type="entry name" value="Tscrpt_reg_HTH_RhaS"/>
</dbReference>
<dbReference type="NCBIfam" id="NF010028">
    <property type="entry name" value="PRK13503.1"/>
    <property type="match status" value="1"/>
</dbReference>
<dbReference type="PANTHER" id="PTHR46796:SF13">
    <property type="entry name" value="HTH-TYPE TRANSCRIPTIONAL ACTIVATOR RHAS"/>
    <property type="match status" value="1"/>
</dbReference>
<dbReference type="PANTHER" id="PTHR46796">
    <property type="entry name" value="HTH-TYPE TRANSCRIPTIONAL ACTIVATOR RHAS-RELATED"/>
    <property type="match status" value="1"/>
</dbReference>
<dbReference type="Pfam" id="PF02311">
    <property type="entry name" value="AraC_binding"/>
    <property type="match status" value="1"/>
</dbReference>
<dbReference type="Pfam" id="PF12833">
    <property type="entry name" value="HTH_18"/>
    <property type="match status" value="1"/>
</dbReference>
<dbReference type="PRINTS" id="PR00032">
    <property type="entry name" value="HTHARAC"/>
</dbReference>
<dbReference type="SMART" id="SM00342">
    <property type="entry name" value="HTH_ARAC"/>
    <property type="match status" value="1"/>
</dbReference>
<dbReference type="SUPFAM" id="SSF46689">
    <property type="entry name" value="Homeodomain-like"/>
    <property type="match status" value="2"/>
</dbReference>
<dbReference type="SUPFAM" id="SSF51215">
    <property type="entry name" value="Regulatory protein AraC"/>
    <property type="match status" value="1"/>
</dbReference>
<dbReference type="PROSITE" id="PS00041">
    <property type="entry name" value="HTH_ARAC_FAMILY_1"/>
    <property type="match status" value="1"/>
</dbReference>
<dbReference type="PROSITE" id="PS01124">
    <property type="entry name" value="HTH_ARAC_FAMILY_2"/>
    <property type="match status" value="1"/>
</dbReference>
<feature type="chain" id="PRO_1000185178" description="HTH-type transcriptional activator RhaS">
    <location>
        <begin position="1"/>
        <end position="278"/>
    </location>
</feature>
<feature type="domain" description="HTH araC/xylS-type" evidence="1">
    <location>
        <begin position="174"/>
        <end position="272"/>
    </location>
</feature>
<feature type="DNA-binding region" description="H-T-H motif" evidence="1">
    <location>
        <begin position="191"/>
        <end position="212"/>
    </location>
</feature>
<feature type="DNA-binding region" description="H-T-H motif" evidence="1">
    <location>
        <begin position="239"/>
        <end position="262"/>
    </location>
</feature>
<feature type="site" description="Interaction with sigma-70" evidence="1">
    <location>
        <position position="241"/>
    </location>
</feature>
<feature type="site" description="Interaction with sigma-70" evidence="1">
    <location>
        <position position="250"/>
    </location>
</feature>
<accession>B7L9G1</accession>
<reference key="1">
    <citation type="journal article" date="2009" name="PLoS Genet.">
        <title>Organised genome dynamics in the Escherichia coli species results in highly diverse adaptive paths.</title>
        <authorList>
            <person name="Touchon M."/>
            <person name="Hoede C."/>
            <person name="Tenaillon O."/>
            <person name="Barbe V."/>
            <person name="Baeriswyl S."/>
            <person name="Bidet P."/>
            <person name="Bingen E."/>
            <person name="Bonacorsi S."/>
            <person name="Bouchier C."/>
            <person name="Bouvet O."/>
            <person name="Calteau A."/>
            <person name="Chiapello H."/>
            <person name="Clermont O."/>
            <person name="Cruveiller S."/>
            <person name="Danchin A."/>
            <person name="Diard M."/>
            <person name="Dossat C."/>
            <person name="Karoui M.E."/>
            <person name="Frapy E."/>
            <person name="Garry L."/>
            <person name="Ghigo J.M."/>
            <person name="Gilles A.M."/>
            <person name="Johnson J."/>
            <person name="Le Bouguenec C."/>
            <person name="Lescat M."/>
            <person name="Mangenot S."/>
            <person name="Martinez-Jehanne V."/>
            <person name="Matic I."/>
            <person name="Nassif X."/>
            <person name="Oztas S."/>
            <person name="Petit M.A."/>
            <person name="Pichon C."/>
            <person name="Rouy Z."/>
            <person name="Ruf C.S."/>
            <person name="Schneider D."/>
            <person name="Tourret J."/>
            <person name="Vacherie B."/>
            <person name="Vallenet D."/>
            <person name="Medigue C."/>
            <person name="Rocha E.P.C."/>
            <person name="Denamur E."/>
        </authorList>
    </citation>
    <scope>NUCLEOTIDE SEQUENCE [LARGE SCALE GENOMIC DNA]</scope>
    <source>
        <strain>55989 / EAEC</strain>
    </source>
</reference>
<sequence length="278" mass="32315">MTVLHSVDFFPSGNASVAIEPRLPQADFPEHHHDFHEIVIVEHGTGIHVFNGQPYTITGGTVCFVRDHDRHLYEHTDNLCLTNVLYRSPDRFQFLAGLNQLLPQELDGQYPSHWRVNHSVLQQVRQLVAQMEQQEGENDLPSTASREILFMQLLLLLRKSSLQENLENSASRLNLLLAWLEDHFADEVNWDAVADQFSLSLRTLHRQLKQQTGLTPQRYLNRLRLMKARHLLRHSEASVTDIAYRCGFSDSNHFSTLFRREFNWSPRDIRQGRDGFLQ</sequence>
<keyword id="KW-0010">Activator</keyword>
<keyword id="KW-0963">Cytoplasm</keyword>
<keyword id="KW-0238">DNA-binding</keyword>
<keyword id="KW-1185">Reference proteome</keyword>
<keyword id="KW-0677">Repeat</keyword>
<keyword id="KW-0684">Rhamnose metabolism</keyword>
<keyword id="KW-0804">Transcription</keyword>
<keyword id="KW-0805">Transcription regulation</keyword>